<accession>C0JAZ7</accession>
<evidence type="ECO:0000250" key="1">
    <source>
        <dbReference type="UniProtKB" id="A0A0D4WTV1"/>
    </source>
</evidence>
<evidence type="ECO:0000250" key="2">
    <source>
        <dbReference type="UniProtKB" id="A0A0D4WV12"/>
    </source>
</evidence>
<evidence type="ECO:0000250" key="3">
    <source>
        <dbReference type="UniProtKB" id="P0CE80"/>
    </source>
</evidence>
<evidence type="ECO:0000250" key="4">
    <source>
        <dbReference type="UniProtKB" id="Q4ZFU2"/>
    </source>
</evidence>
<evidence type="ECO:0000250" key="5">
    <source>
        <dbReference type="UniProtKB" id="Q8I914"/>
    </source>
</evidence>
<evidence type="ECO:0000303" key="6">
    <source>
    </source>
</evidence>
<evidence type="ECO:0000305" key="7"/>
<evidence type="ECO:0000305" key="8">
    <source>
    </source>
</evidence>
<feature type="chain" id="PRO_0000392813" description="Dermonecrotic toxin LvSicTox-alphaIC1biv">
    <location>
        <begin position="1" status="less than"/>
        <end position="272"/>
    </location>
</feature>
<feature type="active site" evidence="5">
    <location>
        <position position="5"/>
    </location>
</feature>
<feature type="active site" description="Nucleophile" evidence="5">
    <location>
        <position position="41"/>
    </location>
</feature>
<feature type="binding site" evidence="5">
    <location>
        <position position="25"/>
    </location>
    <ligand>
        <name>Mg(2+)</name>
        <dbReference type="ChEBI" id="CHEBI:18420"/>
    </ligand>
</feature>
<feature type="binding site" evidence="5">
    <location>
        <position position="27"/>
    </location>
    <ligand>
        <name>Mg(2+)</name>
        <dbReference type="ChEBI" id="CHEBI:18420"/>
    </ligand>
</feature>
<feature type="binding site" evidence="5">
    <location>
        <position position="84"/>
    </location>
    <ligand>
        <name>Mg(2+)</name>
        <dbReference type="ChEBI" id="CHEBI:18420"/>
    </ligand>
</feature>
<feature type="disulfide bond" evidence="3">
    <location>
        <begin position="45"/>
        <end position="51"/>
    </location>
</feature>
<feature type="disulfide bond" evidence="3">
    <location>
        <begin position="47"/>
        <end position="189"/>
    </location>
</feature>
<feature type="non-terminal residue">
    <location>
        <position position="1"/>
    </location>
</feature>
<dbReference type="EC" id="4.6.1.-" evidence="4"/>
<dbReference type="EMBL" id="FJ171432">
    <property type="protein sequence ID" value="ACN48928.1"/>
    <property type="molecule type" value="mRNA"/>
</dbReference>
<dbReference type="SMR" id="C0JAZ7"/>
<dbReference type="GO" id="GO:0005576">
    <property type="term" value="C:extracellular region"/>
    <property type="evidence" value="ECO:0007669"/>
    <property type="project" value="UniProtKB-SubCell"/>
</dbReference>
<dbReference type="GO" id="GO:0016829">
    <property type="term" value="F:lyase activity"/>
    <property type="evidence" value="ECO:0007669"/>
    <property type="project" value="UniProtKB-KW"/>
</dbReference>
<dbReference type="GO" id="GO:0046872">
    <property type="term" value="F:metal ion binding"/>
    <property type="evidence" value="ECO:0007669"/>
    <property type="project" value="UniProtKB-KW"/>
</dbReference>
<dbReference type="GO" id="GO:0008081">
    <property type="term" value="F:phosphoric diester hydrolase activity"/>
    <property type="evidence" value="ECO:0007669"/>
    <property type="project" value="InterPro"/>
</dbReference>
<dbReference type="GO" id="GO:0090729">
    <property type="term" value="F:toxin activity"/>
    <property type="evidence" value="ECO:0007669"/>
    <property type="project" value="UniProtKB-KW"/>
</dbReference>
<dbReference type="GO" id="GO:0031640">
    <property type="term" value="P:killing of cells of another organism"/>
    <property type="evidence" value="ECO:0007669"/>
    <property type="project" value="UniProtKB-KW"/>
</dbReference>
<dbReference type="GO" id="GO:0016042">
    <property type="term" value="P:lipid catabolic process"/>
    <property type="evidence" value="ECO:0007669"/>
    <property type="project" value="UniProtKB-KW"/>
</dbReference>
<dbReference type="CDD" id="cd08576">
    <property type="entry name" value="GDPD_like_SMaseD_PLD"/>
    <property type="match status" value="1"/>
</dbReference>
<dbReference type="Gene3D" id="3.20.20.190">
    <property type="entry name" value="Phosphatidylinositol (PI) phosphodiesterase"/>
    <property type="match status" value="1"/>
</dbReference>
<dbReference type="InterPro" id="IPR017946">
    <property type="entry name" value="PLC-like_Pdiesterase_TIM-brl"/>
</dbReference>
<dbReference type="SUPFAM" id="SSF51695">
    <property type="entry name" value="PLC-like phosphodiesterases"/>
    <property type="match status" value="1"/>
</dbReference>
<proteinExistence type="evidence at transcript level"/>
<sequence>LDMGHMVNNIKQIDEFVNLGSNAIETDVSFDKKANPEYTYHGTPCDCGRDCLRWEYFNDFVKALRTATTPGNSKYDKLFLVVFDLKTSSLYDYQASEAGTKLAKNLLQHYWNNGNNGGRAYIILSIPNLKHYKLITGFQQTLKDEGHAELLDKVGYDFSGNDDIGDVQKTYEKAGVTGHVWQSDGITNCLLRGFTRINAAVANRDSANGIINKVYYWTVDKRQTTRDTLDANVDGIMTNYPDITVEILNEDAYKKKFRIATYEDNPWETFKE</sequence>
<protein>
    <recommendedName>
        <fullName evidence="6">Dermonecrotic toxin LvSicTox-alphaIC1biv</fullName>
        <ecNumber evidence="4">4.6.1.-</ecNumber>
    </recommendedName>
    <alternativeName>
        <fullName>Phospholipase D</fullName>
        <shortName>PLD</shortName>
    </alternativeName>
    <alternativeName>
        <fullName>Sphingomyelin phosphodiesterase D</fullName>
        <shortName>SMD</shortName>
        <shortName>SMase D</shortName>
        <shortName>Sphingomyelinase D</shortName>
    </alternativeName>
</protein>
<comment type="function">
    <text evidence="1 3">Dermonecrotic toxins cleave the phosphodiester linkage between the phosphate and headgroup of certain phospholipids (sphingolipid and lysolipid substrates), forming an alcohol (often choline) and a cyclic phosphate (By similarity). This toxin acts on sphingomyelin (SM) (By similarity). It may also act on ceramide phosphoethanolamine (CPE), lysophosphatidylcholine (LPC) and lysophosphatidylethanolamine (LPE), but not on lysophosphatidylserine (LPS), and lysophosphatidylglycerol (LPG) (By similarity). It acts by transphosphatidylation, releasing exclusively cyclic phosphate products as second products (By similarity). Induces dermonecrosis, hemolysis, increased vascular permeability, edema, inflammatory response, and platelet aggregation (By similarity).</text>
</comment>
<comment type="catalytic activity">
    <reaction evidence="1">
        <text>an N-(acyl)-sphingosylphosphocholine = an N-(acyl)-sphingosyl-1,3-cyclic phosphate + choline</text>
        <dbReference type="Rhea" id="RHEA:60652"/>
        <dbReference type="ChEBI" id="CHEBI:15354"/>
        <dbReference type="ChEBI" id="CHEBI:64583"/>
        <dbReference type="ChEBI" id="CHEBI:143892"/>
    </reaction>
</comment>
<comment type="catalytic activity">
    <reaction evidence="1">
        <text>an N-(acyl)-sphingosylphosphoethanolamine = an N-(acyl)-sphingosyl-1,3-cyclic phosphate + ethanolamine</text>
        <dbReference type="Rhea" id="RHEA:60648"/>
        <dbReference type="ChEBI" id="CHEBI:57603"/>
        <dbReference type="ChEBI" id="CHEBI:143891"/>
        <dbReference type="ChEBI" id="CHEBI:143892"/>
    </reaction>
</comment>
<comment type="catalytic activity">
    <reaction evidence="1">
        <text>a 1-acyl-sn-glycero-3-phosphocholine = a 1-acyl-sn-glycero-2,3-cyclic phosphate + choline</text>
        <dbReference type="Rhea" id="RHEA:60700"/>
        <dbReference type="ChEBI" id="CHEBI:15354"/>
        <dbReference type="ChEBI" id="CHEBI:58168"/>
        <dbReference type="ChEBI" id="CHEBI:143947"/>
    </reaction>
</comment>
<comment type="catalytic activity">
    <reaction evidence="1">
        <text>a 1-acyl-sn-glycero-3-phosphoethanolamine = a 1-acyl-sn-glycero-2,3-cyclic phosphate + ethanolamine</text>
        <dbReference type="Rhea" id="RHEA:60704"/>
        <dbReference type="ChEBI" id="CHEBI:57603"/>
        <dbReference type="ChEBI" id="CHEBI:64381"/>
        <dbReference type="ChEBI" id="CHEBI:143947"/>
    </reaction>
</comment>
<comment type="cofactor">
    <cofactor evidence="5">
        <name>Mg(2+)</name>
        <dbReference type="ChEBI" id="CHEBI:18420"/>
    </cofactor>
    <text evidence="5">Binds 1 Mg(2+) ion per subunit.</text>
</comment>
<comment type="subcellular location">
    <subcellularLocation>
        <location evidence="8">Secreted</location>
    </subcellularLocation>
</comment>
<comment type="tissue specificity">
    <text evidence="8">Expressed by the venom gland.</text>
</comment>
<comment type="similarity">
    <text evidence="7">Belongs to the arthropod phospholipase D family. Class II subfamily.</text>
</comment>
<comment type="caution">
    <text evidence="1 2 4">The most common activity assay for dermonecrotic toxins detects enzymatic activity by monitoring choline release from substrate. Liberation of choline from sphingomyelin (SM) or lysophosphatidylcholine (LPC) is commonly assumed to result from substrate hydrolysis, giving either ceramide-1-phosphate (C1P) or lysophosphatidic acid (LPA), respectively, as a second product. However, two studies from Lajoie and colleagues (2013 and 2015) report the observation of exclusive formation of cyclic phosphate products as second products, resulting from intramolecular transphosphatidylation. Cyclic phosphates have vastly different biological properties from their monoester counterparts, and they may be relevant to the pathology of brown spider envenomation.</text>
</comment>
<organism>
    <name type="scientific">Loxosceles variegata</name>
    <name type="common">Recluse spider</name>
    <dbReference type="NCBI Taxonomy" id="571533"/>
    <lineage>
        <taxon>Eukaryota</taxon>
        <taxon>Metazoa</taxon>
        <taxon>Ecdysozoa</taxon>
        <taxon>Arthropoda</taxon>
        <taxon>Chelicerata</taxon>
        <taxon>Arachnida</taxon>
        <taxon>Araneae</taxon>
        <taxon>Araneomorphae</taxon>
        <taxon>Haplogynae</taxon>
        <taxon>Scytodoidea</taxon>
        <taxon>Sicariidae</taxon>
        <taxon>Loxosceles</taxon>
    </lineage>
</organism>
<keyword id="KW-0204">Cytolysis</keyword>
<keyword id="KW-1061">Dermonecrotic toxin</keyword>
<keyword id="KW-1015">Disulfide bond</keyword>
<keyword id="KW-0354">Hemolysis</keyword>
<keyword id="KW-0442">Lipid degradation</keyword>
<keyword id="KW-0443">Lipid metabolism</keyword>
<keyword id="KW-0456">Lyase</keyword>
<keyword id="KW-0460">Magnesium</keyword>
<keyword id="KW-0479">Metal-binding</keyword>
<keyword id="KW-0964">Secreted</keyword>
<keyword id="KW-0800">Toxin</keyword>
<reference key="1">
    <citation type="journal article" date="2009" name="Mol. Biol. Evol.">
        <title>Molecular evolution, functional variation, and proposed nomenclature of the gene family that includes sphingomyelinase D in sicariid spider venoms.</title>
        <authorList>
            <person name="Binford G.J."/>
            <person name="Bodner M.R."/>
            <person name="Cordes M.H."/>
            <person name="Baldwin K.L."/>
            <person name="Rynerson M.R."/>
            <person name="Burns S.N."/>
            <person name="Zobel-Thropp P.A."/>
        </authorList>
    </citation>
    <scope>NUCLEOTIDE SEQUENCE [MRNA]</scope>
    <scope>NOMENCLATURE</scope>
    <source>
        <tissue>Venom gland</tissue>
    </source>
</reference>
<name>A1OB4_LOXVA</name>